<proteinExistence type="inferred from homology"/>
<reference key="1">
    <citation type="journal article" date="2011" name="Stand. Genomic Sci.">
        <title>Complete genome sequence of 'Thioalkalivibrio sulfidophilus' HL-EbGr7.</title>
        <authorList>
            <person name="Muyzer G."/>
            <person name="Sorokin D.Y."/>
            <person name="Mavromatis K."/>
            <person name="Lapidus A."/>
            <person name="Clum A."/>
            <person name="Ivanova N."/>
            <person name="Pati A."/>
            <person name="d'Haeseleer P."/>
            <person name="Woyke T."/>
            <person name="Kyrpides N.C."/>
        </authorList>
    </citation>
    <scope>NUCLEOTIDE SEQUENCE [LARGE SCALE GENOMIC DNA]</scope>
    <source>
        <strain>HL-EbGR7</strain>
    </source>
</reference>
<feature type="chain" id="PRO_0000376398" description="NADH-quinone oxidoreductase subunit B">
    <location>
        <begin position="1"/>
        <end position="158"/>
    </location>
</feature>
<feature type="binding site" evidence="1">
    <location>
        <position position="37"/>
    </location>
    <ligand>
        <name>[4Fe-4S] cluster</name>
        <dbReference type="ChEBI" id="CHEBI:49883"/>
    </ligand>
</feature>
<feature type="binding site" evidence="1">
    <location>
        <position position="38"/>
    </location>
    <ligand>
        <name>[4Fe-4S] cluster</name>
        <dbReference type="ChEBI" id="CHEBI:49883"/>
    </ligand>
</feature>
<feature type="binding site" evidence="1">
    <location>
        <position position="102"/>
    </location>
    <ligand>
        <name>[4Fe-4S] cluster</name>
        <dbReference type="ChEBI" id="CHEBI:49883"/>
    </ligand>
</feature>
<feature type="binding site" evidence="1">
    <location>
        <position position="132"/>
    </location>
    <ligand>
        <name>[4Fe-4S] cluster</name>
        <dbReference type="ChEBI" id="CHEBI:49883"/>
    </ligand>
</feature>
<keyword id="KW-0004">4Fe-4S</keyword>
<keyword id="KW-0997">Cell inner membrane</keyword>
<keyword id="KW-1003">Cell membrane</keyword>
<keyword id="KW-0408">Iron</keyword>
<keyword id="KW-0411">Iron-sulfur</keyword>
<keyword id="KW-0472">Membrane</keyword>
<keyword id="KW-0479">Metal-binding</keyword>
<keyword id="KW-0520">NAD</keyword>
<keyword id="KW-0874">Quinone</keyword>
<keyword id="KW-1185">Reference proteome</keyword>
<keyword id="KW-1278">Translocase</keyword>
<keyword id="KW-0813">Transport</keyword>
<keyword id="KW-0830">Ubiquinone</keyword>
<organism>
    <name type="scientific">Thioalkalivibrio sulfidiphilus (strain HL-EbGR7)</name>
    <dbReference type="NCBI Taxonomy" id="396588"/>
    <lineage>
        <taxon>Bacteria</taxon>
        <taxon>Pseudomonadati</taxon>
        <taxon>Pseudomonadota</taxon>
        <taxon>Gammaproteobacteria</taxon>
        <taxon>Chromatiales</taxon>
        <taxon>Ectothiorhodospiraceae</taxon>
        <taxon>Thioalkalivibrio</taxon>
    </lineage>
</organism>
<comment type="function">
    <text evidence="1">NDH-1 shuttles electrons from NADH, via FMN and iron-sulfur (Fe-S) centers, to quinones in the respiratory chain. The immediate electron acceptor for the enzyme in this species is believed to be ubiquinone. Couples the redox reaction to proton translocation (for every two electrons transferred, four hydrogen ions are translocated across the cytoplasmic membrane), and thus conserves the redox energy in a proton gradient.</text>
</comment>
<comment type="catalytic activity">
    <reaction evidence="1">
        <text>a quinone + NADH + 5 H(+)(in) = a quinol + NAD(+) + 4 H(+)(out)</text>
        <dbReference type="Rhea" id="RHEA:57888"/>
        <dbReference type="ChEBI" id="CHEBI:15378"/>
        <dbReference type="ChEBI" id="CHEBI:24646"/>
        <dbReference type="ChEBI" id="CHEBI:57540"/>
        <dbReference type="ChEBI" id="CHEBI:57945"/>
        <dbReference type="ChEBI" id="CHEBI:132124"/>
    </reaction>
</comment>
<comment type="cofactor">
    <cofactor evidence="1">
        <name>[4Fe-4S] cluster</name>
        <dbReference type="ChEBI" id="CHEBI:49883"/>
    </cofactor>
    <text evidence="1">Binds 1 [4Fe-4S] cluster.</text>
</comment>
<comment type="subunit">
    <text evidence="1">NDH-1 is composed of 14 different subunits. Subunits NuoB, C, D, E, F, and G constitute the peripheral sector of the complex.</text>
</comment>
<comment type="subcellular location">
    <subcellularLocation>
        <location evidence="1">Cell inner membrane</location>
        <topology evidence="1">Peripheral membrane protein</topology>
        <orientation evidence="1">Cytoplasmic side</orientation>
    </subcellularLocation>
</comment>
<comment type="similarity">
    <text evidence="1">Belongs to the complex I 20 kDa subunit family.</text>
</comment>
<name>NUOB_THISH</name>
<dbReference type="EC" id="7.1.1.-" evidence="1"/>
<dbReference type="EMBL" id="CP001339">
    <property type="protein sequence ID" value="ACL72075.1"/>
    <property type="molecule type" value="Genomic_DNA"/>
</dbReference>
<dbReference type="RefSeq" id="WP_012637559.1">
    <property type="nucleotide sequence ID" value="NC_011901.1"/>
</dbReference>
<dbReference type="SMR" id="B8GNY6"/>
<dbReference type="STRING" id="396588.Tgr7_0987"/>
<dbReference type="KEGG" id="tgr:Tgr7_0987"/>
<dbReference type="eggNOG" id="COG0377">
    <property type="taxonomic scope" value="Bacteria"/>
</dbReference>
<dbReference type="HOGENOM" id="CLU_055737_7_3_6"/>
<dbReference type="OrthoDB" id="9786737at2"/>
<dbReference type="Proteomes" id="UP000002383">
    <property type="component" value="Chromosome"/>
</dbReference>
<dbReference type="GO" id="GO:0005886">
    <property type="term" value="C:plasma membrane"/>
    <property type="evidence" value="ECO:0007669"/>
    <property type="project" value="UniProtKB-SubCell"/>
</dbReference>
<dbReference type="GO" id="GO:0045271">
    <property type="term" value="C:respiratory chain complex I"/>
    <property type="evidence" value="ECO:0007669"/>
    <property type="project" value="TreeGrafter"/>
</dbReference>
<dbReference type="GO" id="GO:0051539">
    <property type="term" value="F:4 iron, 4 sulfur cluster binding"/>
    <property type="evidence" value="ECO:0007669"/>
    <property type="project" value="UniProtKB-KW"/>
</dbReference>
<dbReference type="GO" id="GO:0005506">
    <property type="term" value="F:iron ion binding"/>
    <property type="evidence" value="ECO:0007669"/>
    <property type="project" value="UniProtKB-UniRule"/>
</dbReference>
<dbReference type="GO" id="GO:0008137">
    <property type="term" value="F:NADH dehydrogenase (ubiquinone) activity"/>
    <property type="evidence" value="ECO:0007669"/>
    <property type="project" value="InterPro"/>
</dbReference>
<dbReference type="GO" id="GO:0050136">
    <property type="term" value="F:NADH:ubiquinone reductase (non-electrogenic) activity"/>
    <property type="evidence" value="ECO:0007669"/>
    <property type="project" value="UniProtKB-UniRule"/>
</dbReference>
<dbReference type="GO" id="GO:0048038">
    <property type="term" value="F:quinone binding"/>
    <property type="evidence" value="ECO:0007669"/>
    <property type="project" value="UniProtKB-KW"/>
</dbReference>
<dbReference type="GO" id="GO:0009060">
    <property type="term" value="P:aerobic respiration"/>
    <property type="evidence" value="ECO:0007669"/>
    <property type="project" value="TreeGrafter"/>
</dbReference>
<dbReference type="GO" id="GO:0015990">
    <property type="term" value="P:electron transport coupled proton transport"/>
    <property type="evidence" value="ECO:0007669"/>
    <property type="project" value="TreeGrafter"/>
</dbReference>
<dbReference type="FunFam" id="3.40.50.12280:FF:000001">
    <property type="entry name" value="NADH-quinone oxidoreductase subunit B 2"/>
    <property type="match status" value="1"/>
</dbReference>
<dbReference type="Gene3D" id="3.40.50.12280">
    <property type="match status" value="1"/>
</dbReference>
<dbReference type="HAMAP" id="MF_01356">
    <property type="entry name" value="NDH1_NuoB"/>
    <property type="match status" value="1"/>
</dbReference>
<dbReference type="InterPro" id="IPR006137">
    <property type="entry name" value="NADH_UbQ_OxRdtase-like_20kDa"/>
</dbReference>
<dbReference type="InterPro" id="IPR006138">
    <property type="entry name" value="NADH_UQ_OxRdtase_20Kd_su"/>
</dbReference>
<dbReference type="NCBIfam" id="TIGR01957">
    <property type="entry name" value="nuoB_fam"/>
    <property type="match status" value="1"/>
</dbReference>
<dbReference type="NCBIfam" id="NF005012">
    <property type="entry name" value="PRK06411.1"/>
    <property type="match status" value="1"/>
</dbReference>
<dbReference type="PANTHER" id="PTHR11995">
    <property type="entry name" value="NADH DEHYDROGENASE"/>
    <property type="match status" value="1"/>
</dbReference>
<dbReference type="PANTHER" id="PTHR11995:SF14">
    <property type="entry name" value="NADH DEHYDROGENASE [UBIQUINONE] IRON-SULFUR PROTEIN 7, MITOCHONDRIAL"/>
    <property type="match status" value="1"/>
</dbReference>
<dbReference type="Pfam" id="PF01058">
    <property type="entry name" value="Oxidored_q6"/>
    <property type="match status" value="1"/>
</dbReference>
<dbReference type="SUPFAM" id="SSF56770">
    <property type="entry name" value="HydA/Nqo6-like"/>
    <property type="match status" value="1"/>
</dbReference>
<dbReference type="PROSITE" id="PS01150">
    <property type="entry name" value="COMPLEX1_20K"/>
    <property type="match status" value="1"/>
</dbReference>
<sequence length="158" mass="17411">MGIEGVLEKGFVTTSADKLINWARTGSLWPMTFGLACCAVEMMHAGASRYDLDRFGVVFRPSPRQSDVMIVAGTLVNKMAPALRKVYDQMAEPRWVISMGSCANGGGYYHYSYAVVRGCDRIVPVDIYVPGCPPTAEALLYGILQLQNKIRRTNTIAR</sequence>
<gene>
    <name evidence="1" type="primary">nuoB</name>
    <name type="ordered locus">Tgr7_0987</name>
</gene>
<accession>B8GNY6</accession>
<protein>
    <recommendedName>
        <fullName evidence="1">NADH-quinone oxidoreductase subunit B</fullName>
        <ecNumber evidence="1">7.1.1.-</ecNumber>
    </recommendedName>
    <alternativeName>
        <fullName evidence="1">NADH dehydrogenase I subunit B</fullName>
    </alternativeName>
    <alternativeName>
        <fullName evidence="1">NDH-1 subunit B</fullName>
    </alternativeName>
</protein>
<evidence type="ECO:0000255" key="1">
    <source>
        <dbReference type="HAMAP-Rule" id="MF_01356"/>
    </source>
</evidence>